<reference key="1">
    <citation type="journal article" date="2008" name="J. Bacteriol.">
        <title>Genome sequence of Staphylococcus aureus strain Newman and comparative analysis of staphylococcal genomes: polymorphism and evolution of two major pathogenicity islands.</title>
        <authorList>
            <person name="Baba T."/>
            <person name="Bae T."/>
            <person name="Schneewind O."/>
            <person name="Takeuchi F."/>
            <person name="Hiramatsu K."/>
        </authorList>
    </citation>
    <scope>NUCLEOTIDE SEQUENCE [LARGE SCALE GENOMIC DNA]</scope>
    <source>
        <strain>Newman</strain>
    </source>
</reference>
<name>DNLJ_STAAE</name>
<organism>
    <name type="scientific">Staphylococcus aureus (strain Newman)</name>
    <dbReference type="NCBI Taxonomy" id="426430"/>
    <lineage>
        <taxon>Bacteria</taxon>
        <taxon>Bacillati</taxon>
        <taxon>Bacillota</taxon>
        <taxon>Bacilli</taxon>
        <taxon>Bacillales</taxon>
        <taxon>Staphylococcaceae</taxon>
        <taxon>Staphylococcus</taxon>
    </lineage>
</organism>
<sequence length="667" mass="75081">MADLSSRVNELHDLLNQYSYEYYVEDNPSVPDSEYDKLLHELIKIEEEHPEYKTVDSPTVRVGGEAQASFNKVNHDTPMLSLGNAFNEDDLRKFDQRIREQIGNVEYMCELKIDGLAVSLKYVDGYFVQGLTRGDGTTGEDITENLKTIHAIPLKMKEPLNVEVRGEAYMPRRSFLRLNEEKEKNDEQLFANPRNAAAGSLRQLDSKLTAKRKLSVFIYSVNDFTDFNARSQSEALDELDKLGFTTNKNRARVNNIDGVLEYIEKWTSQRESLPYDIDGIVIKVNDLDQQDEMGFTQKSPRWAIAYKFPAEEVVTKLLDIELSIGRTGVVTPTAILEPVKVAGTTVSRASLHNEDLIHDRDIRIGDSVVVKKAGDIIPEVVRSIPERRPEDAVTYHMPTHCPSCGHELVRIEGEVALRCINPKCQAQLVEGLIHFVSRQAMNIDGLGTKIIQQLYQSELIKDVADIFYLTEEDLLPLDRMGQKKVDNLLAAIQQAKDNSLENLLFGLGIRHLGVKASQVLAEKYETIDRLLTVTEAELVEIHDIGDKVAQSVVTYLENEDIRALIQKLKDKHVNMIYKGIKTSDIEGHPEFSGKTIVLTGKLHQMTRNEASKWLASQGAKVTSSVTKNTDVVIAGEDAGSKLTKAQSLGIEIWTEQQFVDKQNELNS</sequence>
<protein>
    <recommendedName>
        <fullName evidence="1">DNA ligase</fullName>
        <ecNumber evidence="1">6.5.1.2</ecNumber>
    </recommendedName>
    <alternativeName>
        <fullName evidence="1">Polydeoxyribonucleotide synthase [NAD(+)]</fullName>
    </alternativeName>
</protein>
<proteinExistence type="inferred from homology"/>
<gene>
    <name evidence="1" type="primary">ligA</name>
    <name type="ordered locus">NWMN_1842</name>
</gene>
<keyword id="KW-0227">DNA damage</keyword>
<keyword id="KW-0234">DNA repair</keyword>
<keyword id="KW-0235">DNA replication</keyword>
<keyword id="KW-0436">Ligase</keyword>
<keyword id="KW-0460">Magnesium</keyword>
<keyword id="KW-0464">Manganese</keyword>
<keyword id="KW-0479">Metal-binding</keyword>
<keyword id="KW-0520">NAD</keyword>
<keyword id="KW-0862">Zinc</keyword>
<dbReference type="EC" id="6.5.1.2" evidence="1"/>
<dbReference type="EMBL" id="AP009351">
    <property type="protein sequence ID" value="BAF68114.1"/>
    <property type="molecule type" value="Genomic_DNA"/>
</dbReference>
<dbReference type="RefSeq" id="WP_000774565.1">
    <property type="nucleotide sequence ID" value="NZ_JBBIAE010000010.1"/>
</dbReference>
<dbReference type="SMR" id="A6QID2"/>
<dbReference type="KEGG" id="sae:NWMN_1842"/>
<dbReference type="HOGENOM" id="CLU_007764_2_1_9"/>
<dbReference type="Proteomes" id="UP000006386">
    <property type="component" value="Chromosome"/>
</dbReference>
<dbReference type="GO" id="GO:0005829">
    <property type="term" value="C:cytosol"/>
    <property type="evidence" value="ECO:0007669"/>
    <property type="project" value="TreeGrafter"/>
</dbReference>
<dbReference type="GO" id="GO:0003677">
    <property type="term" value="F:DNA binding"/>
    <property type="evidence" value="ECO:0007669"/>
    <property type="project" value="InterPro"/>
</dbReference>
<dbReference type="GO" id="GO:0003911">
    <property type="term" value="F:DNA ligase (NAD+) activity"/>
    <property type="evidence" value="ECO:0007669"/>
    <property type="project" value="UniProtKB-UniRule"/>
</dbReference>
<dbReference type="GO" id="GO:0046872">
    <property type="term" value="F:metal ion binding"/>
    <property type="evidence" value="ECO:0007669"/>
    <property type="project" value="UniProtKB-KW"/>
</dbReference>
<dbReference type="GO" id="GO:0006281">
    <property type="term" value="P:DNA repair"/>
    <property type="evidence" value="ECO:0007669"/>
    <property type="project" value="UniProtKB-KW"/>
</dbReference>
<dbReference type="GO" id="GO:0006260">
    <property type="term" value="P:DNA replication"/>
    <property type="evidence" value="ECO:0007669"/>
    <property type="project" value="UniProtKB-KW"/>
</dbReference>
<dbReference type="CDD" id="cd17748">
    <property type="entry name" value="BRCT_DNA_ligase_like"/>
    <property type="match status" value="1"/>
</dbReference>
<dbReference type="CDD" id="cd00114">
    <property type="entry name" value="LIGANc"/>
    <property type="match status" value="1"/>
</dbReference>
<dbReference type="FunFam" id="1.10.150.20:FF:000006">
    <property type="entry name" value="DNA ligase"/>
    <property type="match status" value="1"/>
</dbReference>
<dbReference type="FunFam" id="1.10.150.20:FF:000007">
    <property type="entry name" value="DNA ligase"/>
    <property type="match status" value="1"/>
</dbReference>
<dbReference type="FunFam" id="1.10.287.610:FF:000005">
    <property type="entry name" value="DNA ligase"/>
    <property type="match status" value="1"/>
</dbReference>
<dbReference type="FunFam" id="2.40.50.140:FF:000012">
    <property type="entry name" value="DNA ligase"/>
    <property type="match status" value="1"/>
</dbReference>
<dbReference type="FunFam" id="3.30.470.30:FF:000001">
    <property type="entry name" value="DNA ligase"/>
    <property type="match status" value="1"/>
</dbReference>
<dbReference type="FunFam" id="3.40.50.10190:FF:000045">
    <property type="entry name" value="DNA ligase"/>
    <property type="match status" value="1"/>
</dbReference>
<dbReference type="FunFam" id="6.20.10.30:FF:000002">
    <property type="entry name" value="DNA ligase"/>
    <property type="match status" value="1"/>
</dbReference>
<dbReference type="Gene3D" id="6.20.10.30">
    <property type="match status" value="1"/>
</dbReference>
<dbReference type="Gene3D" id="1.10.150.20">
    <property type="entry name" value="5' to 3' exonuclease, C-terminal subdomain"/>
    <property type="match status" value="2"/>
</dbReference>
<dbReference type="Gene3D" id="3.40.50.10190">
    <property type="entry name" value="BRCT domain"/>
    <property type="match status" value="1"/>
</dbReference>
<dbReference type="Gene3D" id="3.30.470.30">
    <property type="entry name" value="DNA ligase/mRNA capping enzyme"/>
    <property type="match status" value="1"/>
</dbReference>
<dbReference type="Gene3D" id="1.10.287.610">
    <property type="entry name" value="Helix hairpin bin"/>
    <property type="match status" value="1"/>
</dbReference>
<dbReference type="Gene3D" id="2.40.50.140">
    <property type="entry name" value="Nucleic acid-binding proteins"/>
    <property type="match status" value="1"/>
</dbReference>
<dbReference type="HAMAP" id="MF_01588">
    <property type="entry name" value="DNA_ligase_A"/>
    <property type="match status" value="1"/>
</dbReference>
<dbReference type="InterPro" id="IPR001357">
    <property type="entry name" value="BRCT_dom"/>
</dbReference>
<dbReference type="InterPro" id="IPR036420">
    <property type="entry name" value="BRCT_dom_sf"/>
</dbReference>
<dbReference type="InterPro" id="IPR041663">
    <property type="entry name" value="DisA/LigA_HHH"/>
</dbReference>
<dbReference type="InterPro" id="IPR001679">
    <property type="entry name" value="DNA_ligase"/>
</dbReference>
<dbReference type="InterPro" id="IPR018239">
    <property type="entry name" value="DNA_ligase_AS"/>
</dbReference>
<dbReference type="InterPro" id="IPR033136">
    <property type="entry name" value="DNA_ligase_CS"/>
</dbReference>
<dbReference type="InterPro" id="IPR013839">
    <property type="entry name" value="DNAligase_adenylation"/>
</dbReference>
<dbReference type="InterPro" id="IPR013840">
    <property type="entry name" value="DNAligase_N"/>
</dbReference>
<dbReference type="InterPro" id="IPR003583">
    <property type="entry name" value="Hlx-hairpin-Hlx_DNA-bd_motif"/>
</dbReference>
<dbReference type="InterPro" id="IPR012340">
    <property type="entry name" value="NA-bd_OB-fold"/>
</dbReference>
<dbReference type="InterPro" id="IPR004150">
    <property type="entry name" value="NAD_DNA_ligase_OB"/>
</dbReference>
<dbReference type="InterPro" id="IPR010994">
    <property type="entry name" value="RuvA_2-like"/>
</dbReference>
<dbReference type="InterPro" id="IPR004149">
    <property type="entry name" value="Znf_DNAligase_C4"/>
</dbReference>
<dbReference type="NCBIfam" id="TIGR00575">
    <property type="entry name" value="dnlj"/>
    <property type="match status" value="1"/>
</dbReference>
<dbReference type="NCBIfam" id="NF005932">
    <property type="entry name" value="PRK07956.1"/>
    <property type="match status" value="1"/>
</dbReference>
<dbReference type="PANTHER" id="PTHR23389">
    <property type="entry name" value="CHROMOSOME TRANSMISSION FIDELITY FACTOR 18"/>
    <property type="match status" value="1"/>
</dbReference>
<dbReference type="PANTHER" id="PTHR23389:SF9">
    <property type="entry name" value="DNA LIGASE"/>
    <property type="match status" value="1"/>
</dbReference>
<dbReference type="Pfam" id="PF00533">
    <property type="entry name" value="BRCT"/>
    <property type="match status" value="1"/>
</dbReference>
<dbReference type="Pfam" id="PF01653">
    <property type="entry name" value="DNA_ligase_aden"/>
    <property type="match status" value="1"/>
</dbReference>
<dbReference type="Pfam" id="PF03120">
    <property type="entry name" value="DNA_ligase_OB"/>
    <property type="match status" value="1"/>
</dbReference>
<dbReference type="Pfam" id="PF03119">
    <property type="entry name" value="DNA_ligase_ZBD"/>
    <property type="match status" value="1"/>
</dbReference>
<dbReference type="Pfam" id="PF12826">
    <property type="entry name" value="HHH_2"/>
    <property type="match status" value="1"/>
</dbReference>
<dbReference type="PIRSF" id="PIRSF001604">
    <property type="entry name" value="LigA"/>
    <property type="match status" value="1"/>
</dbReference>
<dbReference type="SMART" id="SM00292">
    <property type="entry name" value="BRCT"/>
    <property type="match status" value="1"/>
</dbReference>
<dbReference type="SMART" id="SM00278">
    <property type="entry name" value="HhH1"/>
    <property type="match status" value="3"/>
</dbReference>
<dbReference type="SMART" id="SM00532">
    <property type="entry name" value="LIGANc"/>
    <property type="match status" value="1"/>
</dbReference>
<dbReference type="SUPFAM" id="SSF52113">
    <property type="entry name" value="BRCT domain"/>
    <property type="match status" value="1"/>
</dbReference>
<dbReference type="SUPFAM" id="SSF56091">
    <property type="entry name" value="DNA ligase/mRNA capping enzyme, catalytic domain"/>
    <property type="match status" value="1"/>
</dbReference>
<dbReference type="SUPFAM" id="SSF50249">
    <property type="entry name" value="Nucleic acid-binding proteins"/>
    <property type="match status" value="1"/>
</dbReference>
<dbReference type="SUPFAM" id="SSF47781">
    <property type="entry name" value="RuvA domain 2-like"/>
    <property type="match status" value="1"/>
</dbReference>
<dbReference type="PROSITE" id="PS50172">
    <property type="entry name" value="BRCT"/>
    <property type="match status" value="1"/>
</dbReference>
<dbReference type="PROSITE" id="PS01055">
    <property type="entry name" value="DNA_LIGASE_N1"/>
    <property type="match status" value="1"/>
</dbReference>
<dbReference type="PROSITE" id="PS01056">
    <property type="entry name" value="DNA_LIGASE_N2"/>
    <property type="match status" value="1"/>
</dbReference>
<evidence type="ECO:0000255" key="1">
    <source>
        <dbReference type="HAMAP-Rule" id="MF_01588"/>
    </source>
</evidence>
<comment type="function">
    <text evidence="1">DNA ligase that catalyzes the formation of phosphodiester linkages between 5'-phosphoryl and 3'-hydroxyl groups in double-stranded DNA using NAD as a coenzyme and as the energy source for the reaction. It is essential for DNA replication and repair of damaged DNA.</text>
</comment>
<comment type="catalytic activity">
    <reaction evidence="1">
        <text>NAD(+) + (deoxyribonucleotide)n-3'-hydroxyl + 5'-phospho-(deoxyribonucleotide)m = (deoxyribonucleotide)n+m + AMP + beta-nicotinamide D-nucleotide.</text>
        <dbReference type="EC" id="6.5.1.2"/>
    </reaction>
</comment>
<comment type="cofactor">
    <cofactor evidence="1">
        <name>Mg(2+)</name>
        <dbReference type="ChEBI" id="CHEBI:18420"/>
    </cofactor>
    <cofactor evidence="1">
        <name>Mn(2+)</name>
        <dbReference type="ChEBI" id="CHEBI:29035"/>
    </cofactor>
</comment>
<comment type="similarity">
    <text evidence="1">Belongs to the NAD-dependent DNA ligase family. LigA subfamily.</text>
</comment>
<accession>A6QID2</accession>
<feature type="chain" id="PRO_0000340388" description="DNA ligase">
    <location>
        <begin position="1"/>
        <end position="667"/>
    </location>
</feature>
<feature type="domain" description="BRCT" evidence="1">
    <location>
        <begin position="586"/>
        <end position="667"/>
    </location>
</feature>
<feature type="active site" description="N6-AMP-lysine intermediate" evidence="1">
    <location>
        <position position="112"/>
    </location>
</feature>
<feature type="binding site" evidence="1">
    <location>
        <begin position="32"/>
        <end position="36"/>
    </location>
    <ligand>
        <name>NAD(+)</name>
        <dbReference type="ChEBI" id="CHEBI:57540"/>
    </ligand>
</feature>
<feature type="binding site" evidence="1">
    <location>
        <begin position="81"/>
        <end position="82"/>
    </location>
    <ligand>
        <name>NAD(+)</name>
        <dbReference type="ChEBI" id="CHEBI:57540"/>
    </ligand>
</feature>
<feature type="binding site" evidence="1">
    <location>
        <position position="110"/>
    </location>
    <ligand>
        <name>NAD(+)</name>
        <dbReference type="ChEBI" id="CHEBI:57540"/>
    </ligand>
</feature>
<feature type="binding site" evidence="1">
    <location>
        <position position="133"/>
    </location>
    <ligand>
        <name>NAD(+)</name>
        <dbReference type="ChEBI" id="CHEBI:57540"/>
    </ligand>
</feature>
<feature type="binding site" evidence="1">
    <location>
        <position position="167"/>
    </location>
    <ligand>
        <name>NAD(+)</name>
        <dbReference type="ChEBI" id="CHEBI:57540"/>
    </ligand>
</feature>
<feature type="binding site" evidence="1">
    <location>
        <position position="283"/>
    </location>
    <ligand>
        <name>NAD(+)</name>
        <dbReference type="ChEBI" id="CHEBI:57540"/>
    </ligand>
</feature>
<feature type="binding site" evidence="1">
    <location>
        <position position="307"/>
    </location>
    <ligand>
        <name>NAD(+)</name>
        <dbReference type="ChEBI" id="CHEBI:57540"/>
    </ligand>
</feature>
<feature type="binding site" evidence="1">
    <location>
        <position position="401"/>
    </location>
    <ligand>
        <name>Zn(2+)</name>
        <dbReference type="ChEBI" id="CHEBI:29105"/>
    </ligand>
</feature>
<feature type="binding site" evidence="1">
    <location>
        <position position="404"/>
    </location>
    <ligand>
        <name>Zn(2+)</name>
        <dbReference type="ChEBI" id="CHEBI:29105"/>
    </ligand>
</feature>
<feature type="binding site" evidence="1">
    <location>
        <position position="419"/>
    </location>
    <ligand>
        <name>Zn(2+)</name>
        <dbReference type="ChEBI" id="CHEBI:29105"/>
    </ligand>
</feature>
<feature type="binding site" evidence="1">
    <location>
        <position position="424"/>
    </location>
    <ligand>
        <name>Zn(2+)</name>
        <dbReference type="ChEBI" id="CHEBI:29105"/>
    </ligand>
</feature>